<protein>
    <recommendedName>
        <fullName>Thyroid hormone receptor beta-A</fullName>
        <shortName>TRbetaA</shortName>
        <shortName>xTR</shortName>
    </recommendedName>
    <alternativeName>
        <fullName>Nuclear receptor subfamily 1 group A member 2-A</fullName>
    </alternativeName>
</protein>
<reference key="1">
    <citation type="journal article" date="1990" name="Proc. Natl. Acad. Sci. U.S.A.">
        <title>Xenopus laevis alpha and beta thyroid hormone receptors.</title>
        <authorList>
            <person name="Yaoita Y."/>
            <person name="Shi Y.-B."/>
            <person name="Brown D.D."/>
        </authorList>
    </citation>
    <scope>NUCLEOTIDE SEQUENCE [MRNA] (ISOFORMS BETA-A1 AND BETA-A5)</scope>
    <scope>DEVELOPMENTAL STAGE</scope>
    <scope>INDUCTION</scope>
    <source>
        <tissue>Tadpole</tissue>
    </source>
</reference>
<reference key="2">
    <citation type="journal article" date="1990" name="Proc. Natl. Acad. Sci. U.S.A.">
        <authorList>
            <person name="Yaoita Y."/>
            <person name="Shi Y.-B."/>
            <person name="Brown D.D."/>
        </authorList>
    </citation>
    <scope>ERRATUM OF PUBMED:2402492</scope>
</reference>
<reference key="3">
    <citation type="journal article" date="2002" name="Clin. Chem. Lab. Med.">
        <title>The effects of endocrine-disrupting chemicals on thyroid hormone binding to Xenopus laevis transthyretin and thyroid hormone receptor.</title>
        <authorList>
            <person name="Yamauchi K."/>
            <person name="Eguchi R."/>
            <person name="Shimada N."/>
            <person name="Ishihara A."/>
        </authorList>
    </citation>
    <scope>FUNCTION</scope>
    <scope>LACK OF INHIBITION OF TRIIODOTHYRONINE-BINDING</scope>
</reference>
<reference key="4">
    <citation type="journal article" date="2005" name="Toxicol. Sci.">
        <title>In vitro and in vivo analysis of the thyroid disrupting activities of phenolic and phenol compounds in Xenopus laevis.</title>
        <authorList>
            <person name="Kudo Y."/>
            <person name="Yamauchi K."/>
        </authorList>
    </citation>
    <scope>FUNCTION</scope>
    <scope>INHIBITION OF TRIIODOTHYRONINE-BINDING</scope>
</reference>
<reference key="5">
    <citation type="journal article" date="2006" name="Toxicol. Sci.">
        <title>In vitro and in vivo analysis of the thyroid system-disrupting activities of brominated phenolic and phenol compounds in Xenopus laevis.</title>
        <authorList>
            <person name="Kudo Y."/>
            <person name="Yamauchi K."/>
            <person name="Fukazawa H."/>
            <person name="Terao Y."/>
        </authorList>
    </citation>
    <scope>FUNCTION</scope>
    <scope>INHIBITION OF TRIIODOTHYRONINE-BINDING</scope>
</reference>
<gene>
    <name type="primary">thrb-a</name>
    <name type="synonym">nr1a2-a</name>
    <name type="synonym">thrb1</name>
</gene>
<feature type="chain" id="PRO_0000053458" description="Thyroid hormone receptor beta-A">
    <location>
        <begin position="1"/>
        <end position="373"/>
    </location>
</feature>
<feature type="domain" description="NR LBD" evidence="3">
    <location>
        <begin position="129"/>
        <end position="373"/>
    </location>
</feature>
<feature type="DNA-binding region" description="Nuclear receptor" evidence="2">
    <location>
        <begin position="19"/>
        <end position="93"/>
    </location>
</feature>
<feature type="zinc finger region" description="NR C4-type" evidence="2">
    <location>
        <begin position="19"/>
        <end position="39"/>
    </location>
</feature>
<feature type="zinc finger region" description="NR C4-type" evidence="2">
    <location>
        <begin position="57"/>
        <end position="81"/>
    </location>
</feature>
<feature type="region of interest" description="Modulating" evidence="1">
    <location>
        <begin position="1"/>
        <end position="18"/>
    </location>
</feature>
<feature type="splice variant" id="VSP_003627" description="In isoform Beta-A1." evidence="8">
    <original>MPSSMS</original>
    <variation>ME</variation>
    <location>
        <begin position="1"/>
        <end position="6"/>
    </location>
</feature>
<sequence length="373" mass="42300">MPSSMSGYIPSYLDKDELCVVCGDKATGYHYRCITCEGCKGFFRRTIQKNLHPSYSCKYEGKCVIDKVTRNQCQECRFKKCIAVGMATDLVLDDNKRLAKRKLIEENREKRRKDEIQKSLVQKPEPTQEEWELIQVVTEAHVATNAQGSHWKQKRKFLPEDIGQAPIVNAPEGGKVDLEAFSQFTKIITPAITRVVDFAKKLPMFCELPCEDQIILLKGCCMEIMSLRAAVRYDPESETLTLNGEMAVTRGQLKNGGLGVVSDAIFDLGVSLSSFSLDDTEVALLQAVLLMSSDRPGLASVERIEKCQEGFLLAFEHYINYRKHNIAHFWPKLLMKVTDLRMIGACHASRFLHMKVECPTELFPPLFLEVFED</sequence>
<proteinExistence type="evidence at protein level"/>
<organism>
    <name type="scientific">Xenopus laevis</name>
    <name type="common">African clawed frog</name>
    <dbReference type="NCBI Taxonomy" id="8355"/>
    <lineage>
        <taxon>Eukaryota</taxon>
        <taxon>Metazoa</taxon>
        <taxon>Chordata</taxon>
        <taxon>Craniata</taxon>
        <taxon>Vertebrata</taxon>
        <taxon>Euteleostomi</taxon>
        <taxon>Amphibia</taxon>
        <taxon>Batrachia</taxon>
        <taxon>Anura</taxon>
        <taxon>Pipoidea</taxon>
        <taxon>Pipidae</taxon>
        <taxon>Xenopodinae</taxon>
        <taxon>Xenopus</taxon>
        <taxon>Xenopus</taxon>
    </lineage>
</organism>
<name>THBA_XENLA</name>
<keyword id="KW-0025">Alternative splicing</keyword>
<keyword id="KW-0238">DNA-binding</keyword>
<keyword id="KW-0479">Metal-binding</keyword>
<keyword id="KW-0539">Nucleus</keyword>
<keyword id="KW-0675">Receptor</keyword>
<keyword id="KW-1185">Reference proteome</keyword>
<keyword id="KW-0804">Transcription</keyword>
<keyword id="KW-0805">Transcription regulation</keyword>
<keyword id="KW-0862">Zinc</keyword>
<keyword id="KW-0863">Zinc-finger</keyword>
<evidence type="ECO:0000255" key="1"/>
<evidence type="ECO:0000255" key="2">
    <source>
        <dbReference type="PROSITE-ProRule" id="PRU00407"/>
    </source>
</evidence>
<evidence type="ECO:0000255" key="3">
    <source>
        <dbReference type="PROSITE-ProRule" id="PRU01189"/>
    </source>
</evidence>
<evidence type="ECO:0000269" key="4">
    <source>
    </source>
</evidence>
<evidence type="ECO:0000269" key="5">
    <source>
    </source>
</evidence>
<evidence type="ECO:0000269" key="6">
    <source>
    </source>
</evidence>
<evidence type="ECO:0000269" key="7">
    <source>
    </source>
</evidence>
<evidence type="ECO:0000303" key="8">
    <source>
    </source>
</evidence>
<evidence type="ECO:0000305" key="9"/>
<comment type="function">
    <text evidence="4 5 6">High affinity receptor for triiodothyronine (T3).</text>
</comment>
<comment type="subcellular location">
    <subcellularLocation>
        <location>Nucleus</location>
    </subcellularLocation>
</comment>
<comment type="alternative products">
    <event type="alternative splicing"/>
    <isoform>
        <id>P18117-1</id>
        <name>Beta-A5</name>
        <name>BetaA-II</name>
        <sequence type="displayed"/>
    </isoform>
    <isoform>
        <id>P18117-2</id>
        <name>Beta-A1</name>
        <name>BetaA-I</name>
        <sequence type="described" ref="VSP_003627"/>
    </isoform>
    <text>Additional isoforms seem to exist.</text>
</comment>
<comment type="developmental stage">
    <text evidence="7">Expression peaks at the climax of metamorphosis.</text>
</comment>
<comment type="induction">
    <text evidence="7">By thyroid hormone.</text>
</comment>
<comment type="domain">
    <text>Composed of three domains: a modulating N-terminal domain, a DNA-binding domain and a C-terminal ligand-binding domain.</text>
</comment>
<comment type="miscellaneous">
    <text>A number of phenolic and phenol compounds can weakly compete with and disrupt triiodothyronine (T3)-binding including 3,3'5-trichlorobisphenol A, triiodophenol, 3,3'-dibromobisphenol A and 3,3'5-tribromobisphenol A. The synthetic estrogen diethylstilbestrol (DES) is not an effective competitor for T3-binding.</text>
</comment>
<comment type="similarity">
    <text evidence="9">Belongs to the nuclear hormone receptor family. NR1 subfamily.</text>
</comment>
<accession>P18117</accession>
<accession>P18116</accession>
<dbReference type="EMBL" id="M35360">
    <property type="protein sequence ID" value="AAA49656.1"/>
    <property type="molecule type" value="mRNA"/>
</dbReference>
<dbReference type="EMBL" id="M35359">
    <property type="protein sequence ID" value="AAA49654.1"/>
    <property type="molecule type" value="mRNA"/>
</dbReference>
<dbReference type="PIR" id="C36067">
    <property type="entry name" value="C36067"/>
</dbReference>
<dbReference type="RefSeq" id="NP_001090182.1">
    <molecule id="P18117-1"/>
    <property type="nucleotide sequence ID" value="NM_001096713.1"/>
</dbReference>
<dbReference type="RefSeq" id="NP_001090533.1">
    <molecule id="P18117-2"/>
    <property type="nucleotide sequence ID" value="NM_001097064.1"/>
</dbReference>
<dbReference type="SMR" id="P18117"/>
<dbReference type="BioGRID" id="608169">
    <property type="interactions" value="1"/>
</dbReference>
<dbReference type="GeneID" id="779054"/>
<dbReference type="KEGG" id="xla:779054"/>
<dbReference type="AGR" id="Xenbase:XB-GENE-6070716"/>
<dbReference type="CTD" id="7068"/>
<dbReference type="CTD" id="779054"/>
<dbReference type="Xenbase" id="XB-GENE-6070716">
    <property type="gene designation" value="thrb.L"/>
</dbReference>
<dbReference type="OMA" id="AASSNCY"/>
<dbReference type="OrthoDB" id="6081310at2759"/>
<dbReference type="Proteomes" id="UP000186698">
    <property type="component" value="Chromosome 6L"/>
</dbReference>
<dbReference type="Bgee" id="779054">
    <property type="expression patterns" value="Expressed in internal ear and 8 other cell types or tissues"/>
</dbReference>
<dbReference type="GO" id="GO:0005634">
    <property type="term" value="C:nucleus"/>
    <property type="evidence" value="ECO:0000314"/>
    <property type="project" value="UniProtKB"/>
</dbReference>
<dbReference type="GO" id="GO:0090575">
    <property type="term" value="C:RNA polymerase II transcription regulator complex"/>
    <property type="evidence" value="ECO:0000318"/>
    <property type="project" value="GO_Central"/>
</dbReference>
<dbReference type="GO" id="GO:0004879">
    <property type="term" value="F:nuclear receptor activity"/>
    <property type="evidence" value="ECO:0000318"/>
    <property type="project" value="GO_Central"/>
</dbReference>
<dbReference type="GO" id="GO:0046982">
    <property type="term" value="F:protein heterodimerization activity"/>
    <property type="evidence" value="ECO:0000353"/>
    <property type="project" value="UniProtKB"/>
</dbReference>
<dbReference type="GO" id="GO:0000978">
    <property type="term" value="F:RNA polymerase II cis-regulatory region sequence-specific DNA binding"/>
    <property type="evidence" value="ECO:0000318"/>
    <property type="project" value="GO_Central"/>
</dbReference>
<dbReference type="GO" id="GO:0043565">
    <property type="term" value="F:sequence-specific DNA binding"/>
    <property type="evidence" value="ECO:0000314"/>
    <property type="project" value="UniProtKB"/>
</dbReference>
<dbReference type="GO" id="GO:0070324">
    <property type="term" value="F:thyroid hormone binding"/>
    <property type="evidence" value="ECO:0000314"/>
    <property type="project" value="UniProtKB"/>
</dbReference>
<dbReference type="GO" id="GO:0008270">
    <property type="term" value="F:zinc ion binding"/>
    <property type="evidence" value="ECO:0007669"/>
    <property type="project" value="UniProtKB-KW"/>
</dbReference>
<dbReference type="GO" id="GO:0030154">
    <property type="term" value="P:cell differentiation"/>
    <property type="evidence" value="ECO:0000318"/>
    <property type="project" value="GO_Central"/>
</dbReference>
<dbReference type="GO" id="GO:0045892">
    <property type="term" value="P:negative regulation of DNA-templated transcription"/>
    <property type="evidence" value="ECO:0000314"/>
    <property type="project" value="UniProtKB"/>
</dbReference>
<dbReference type="GO" id="GO:0000122">
    <property type="term" value="P:negative regulation of transcription by RNA polymerase II"/>
    <property type="evidence" value="ECO:0000314"/>
    <property type="project" value="UniProtKB"/>
</dbReference>
<dbReference type="GO" id="GO:0045893">
    <property type="term" value="P:positive regulation of DNA-templated transcription"/>
    <property type="evidence" value="ECO:0000314"/>
    <property type="project" value="UniProtKB"/>
</dbReference>
<dbReference type="GO" id="GO:0045944">
    <property type="term" value="P:positive regulation of transcription by RNA polymerase II"/>
    <property type="evidence" value="ECO:0000314"/>
    <property type="project" value="UniProtKB"/>
</dbReference>
<dbReference type="GO" id="GO:0048384">
    <property type="term" value="P:retinoic acid receptor signaling pathway"/>
    <property type="evidence" value="ECO:0000318"/>
    <property type="project" value="GO_Central"/>
</dbReference>
<dbReference type="GO" id="GO:0002154">
    <property type="term" value="P:thyroid hormone receptor signaling pathway"/>
    <property type="evidence" value="ECO:0000318"/>
    <property type="project" value="GO_Central"/>
</dbReference>
<dbReference type="CDD" id="cd06961">
    <property type="entry name" value="NR_DBD_TR"/>
    <property type="match status" value="1"/>
</dbReference>
<dbReference type="CDD" id="cd06935">
    <property type="entry name" value="NR_LBD_TR"/>
    <property type="match status" value="1"/>
</dbReference>
<dbReference type="FunFam" id="1.10.565.10:FF:000006">
    <property type="entry name" value="Thyroid hormone receptor beta 2"/>
    <property type="match status" value="1"/>
</dbReference>
<dbReference type="FunFam" id="3.30.50.10:FF:000011">
    <property type="entry name" value="Thyroid hormone receptor beta isoform"/>
    <property type="match status" value="1"/>
</dbReference>
<dbReference type="Gene3D" id="3.30.50.10">
    <property type="entry name" value="Erythroid Transcription Factor GATA-1, subunit A"/>
    <property type="match status" value="1"/>
</dbReference>
<dbReference type="Gene3D" id="1.10.565.10">
    <property type="entry name" value="Retinoid X Receptor"/>
    <property type="match status" value="1"/>
</dbReference>
<dbReference type="InterPro" id="IPR035500">
    <property type="entry name" value="NHR-like_dom_sf"/>
</dbReference>
<dbReference type="InterPro" id="IPR000536">
    <property type="entry name" value="Nucl_hrmn_rcpt_lig-bd"/>
</dbReference>
<dbReference type="InterPro" id="IPR050234">
    <property type="entry name" value="Nuclear_hormone_rcpt_NR1"/>
</dbReference>
<dbReference type="InterPro" id="IPR001723">
    <property type="entry name" value="Nuclear_hrmn_rcpt"/>
</dbReference>
<dbReference type="InterPro" id="IPR001728">
    <property type="entry name" value="ThyrH_rcpt"/>
</dbReference>
<dbReference type="InterPro" id="IPR001628">
    <property type="entry name" value="Znf_hrmn_rcpt"/>
</dbReference>
<dbReference type="InterPro" id="IPR013088">
    <property type="entry name" value="Znf_NHR/GATA"/>
</dbReference>
<dbReference type="PANTHER" id="PTHR24082">
    <property type="entry name" value="NUCLEAR HORMONE RECEPTOR"/>
    <property type="match status" value="1"/>
</dbReference>
<dbReference type="PANTHER" id="PTHR24082:SF210">
    <property type="entry name" value="THYROID HORMONE RECEPTOR BETA"/>
    <property type="match status" value="1"/>
</dbReference>
<dbReference type="Pfam" id="PF00104">
    <property type="entry name" value="Hormone_recep"/>
    <property type="match status" value="1"/>
</dbReference>
<dbReference type="Pfam" id="PF00105">
    <property type="entry name" value="zf-C4"/>
    <property type="match status" value="1"/>
</dbReference>
<dbReference type="PRINTS" id="PR00398">
    <property type="entry name" value="STRDHORMONER"/>
</dbReference>
<dbReference type="PRINTS" id="PR00047">
    <property type="entry name" value="STROIDFINGER"/>
</dbReference>
<dbReference type="PRINTS" id="PR00546">
    <property type="entry name" value="THYROIDHORMR"/>
</dbReference>
<dbReference type="SMART" id="SM00430">
    <property type="entry name" value="HOLI"/>
    <property type="match status" value="1"/>
</dbReference>
<dbReference type="SMART" id="SM00399">
    <property type="entry name" value="ZnF_C4"/>
    <property type="match status" value="1"/>
</dbReference>
<dbReference type="SUPFAM" id="SSF57716">
    <property type="entry name" value="Glucocorticoid receptor-like (DNA-binding domain)"/>
    <property type="match status" value="1"/>
</dbReference>
<dbReference type="SUPFAM" id="SSF48508">
    <property type="entry name" value="Nuclear receptor ligand-binding domain"/>
    <property type="match status" value="1"/>
</dbReference>
<dbReference type="PROSITE" id="PS51843">
    <property type="entry name" value="NR_LBD"/>
    <property type="match status" value="1"/>
</dbReference>
<dbReference type="PROSITE" id="PS00031">
    <property type="entry name" value="NUCLEAR_REC_DBD_1"/>
    <property type="match status" value="1"/>
</dbReference>
<dbReference type="PROSITE" id="PS51030">
    <property type="entry name" value="NUCLEAR_REC_DBD_2"/>
    <property type="match status" value="1"/>
</dbReference>